<dbReference type="EC" id="4.1.99.12" evidence="1"/>
<dbReference type="EMBL" id="AM286415">
    <property type="protein sequence ID" value="CAL13697.1"/>
    <property type="molecule type" value="Genomic_DNA"/>
</dbReference>
<dbReference type="RefSeq" id="WP_011817217.1">
    <property type="nucleotide sequence ID" value="NC_008800.1"/>
</dbReference>
<dbReference type="RefSeq" id="YP_001007825.1">
    <property type="nucleotide sequence ID" value="NC_008800.1"/>
</dbReference>
<dbReference type="SMR" id="A1JQV2"/>
<dbReference type="GeneID" id="93970806"/>
<dbReference type="KEGG" id="yen:YE3669"/>
<dbReference type="PATRIC" id="fig|393305.7.peg.3906"/>
<dbReference type="eggNOG" id="COG0108">
    <property type="taxonomic scope" value="Bacteria"/>
</dbReference>
<dbReference type="HOGENOM" id="CLU_020273_3_0_6"/>
<dbReference type="OrthoDB" id="9793111at2"/>
<dbReference type="UniPathway" id="UPA00275">
    <property type="reaction ID" value="UER00399"/>
</dbReference>
<dbReference type="Proteomes" id="UP000000642">
    <property type="component" value="Chromosome"/>
</dbReference>
<dbReference type="GO" id="GO:0005829">
    <property type="term" value="C:cytosol"/>
    <property type="evidence" value="ECO:0007669"/>
    <property type="project" value="TreeGrafter"/>
</dbReference>
<dbReference type="GO" id="GO:0008686">
    <property type="term" value="F:3,4-dihydroxy-2-butanone-4-phosphate synthase activity"/>
    <property type="evidence" value="ECO:0007669"/>
    <property type="project" value="UniProtKB-UniRule"/>
</dbReference>
<dbReference type="GO" id="GO:0000287">
    <property type="term" value="F:magnesium ion binding"/>
    <property type="evidence" value="ECO:0007669"/>
    <property type="project" value="UniProtKB-UniRule"/>
</dbReference>
<dbReference type="GO" id="GO:0030145">
    <property type="term" value="F:manganese ion binding"/>
    <property type="evidence" value="ECO:0007669"/>
    <property type="project" value="UniProtKB-UniRule"/>
</dbReference>
<dbReference type="GO" id="GO:0009231">
    <property type="term" value="P:riboflavin biosynthetic process"/>
    <property type="evidence" value="ECO:0007669"/>
    <property type="project" value="UniProtKB-UniRule"/>
</dbReference>
<dbReference type="FunFam" id="3.90.870.10:FF:000002">
    <property type="entry name" value="3,4-dihydroxy-2-butanone 4-phosphate synthase"/>
    <property type="match status" value="1"/>
</dbReference>
<dbReference type="Gene3D" id="3.90.870.10">
    <property type="entry name" value="DHBP synthase"/>
    <property type="match status" value="1"/>
</dbReference>
<dbReference type="HAMAP" id="MF_00180">
    <property type="entry name" value="RibB"/>
    <property type="match status" value="1"/>
</dbReference>
<dbReference type="InterPro" id="IPR017945">
    <property type="entry name" value="DHBP_synth_RibB-like_a/b_dom"/>
</dbReference>
<dbReference type="InterPro" id="IPR000422">
    <property type="entry name" value="DHBP_synthase_RibB"/>
</dbReference>
<dbReference type="NCBIfam" id="TIGR00506">
    <property type="entry name" value="ribB"/>
    <property type="match status" value="1"/>
</dbReference>
<dbReference type="PANTHER" id="PTHR21327:SF38">
    <property type="entry name" value="3,4-DIHYDROXY-2-BUTANONE 4-PHOSPHATE SYNTHASE"/>
    <property type="match status" value="1"/>
</dbReference>
<dbReference type="PANTHER" id="PTHR21327">
    <property type="entry name" value="GTP CYCLOHYDROLASE II-RELATED"/>
    <property type="match status" value="1"/>
</dbReference>
<dbReference type="Pfam" id="PF00926">
    <property type="entry name" value="DHBP_synthase"/>
    <property type="match status" value="1"/>
</dbReference>
<dbReference type="SUPFAM" id="SSF55821">
    <property type="entry name" value="YrdC/RibB"/>
    <property type="match status" value="1"/>
</dbReference>
<gene>
    <name evidence="1" type="primary">ribB</name>
    <name type="ordered locus">YE3669</name>
</gene>
<organism>
    <name type="scientific">Yersinia enterocolitica serotype O:8 / biotype 1B (strain NCTC 13174 / 8081)</name>
    <dbReference type="NCBI Taxonomy" id="393305"/>
    <lineage>
        <taxon>Bacteria</taxon>
        <taxon>Pseudomonadati</taxon>
        <taxon>Pseudomonadota</taxon>
        <taxon>Gammaproteobacteria</taxon>
        <taxon>Enterobacterales</taxon>
        <taxon>Yersiniaceae</taxon>
        <taxon>Yersinia</taxon>
    </lineage>
</organism>
<sequence>MNQTLLSDFGTPVERVERAIDALRNGRGVMVLDDESRENEGDMVFAAEAMTVEQMALTIRHGSGIVCLCITDERRQQLDLPMMVANNSSQFQTAFTVTIEAAKGVTTGVSAADRLTTIRAAIADNAKPTDLNRPGHVFPLRGQPGGVLSRRGHTEASIDLATLAGYKPAGVLCELTNDDGSMAHAPEVIEFAKLHDMPVVTIDDLAEYRQSQEKKAS</sequence>
<feature type="chain" id="PRO_1000040639" description="3,4-dihydroxy-2-butanone 4-phosphate synthase">
    <location>
        <begin position="1"/>
        <end position="217"/>
    </location>
</feature>
<feature type="binding site" evidence="1">
    <location>
        <begin position="37"/>
        <end position="38"/>
    </location>
    <ligand>
        <name>D-ribulose 5-phosphate</name>
        <dbReference type="ChEBI" id="CHEBI:58121"/>
    </ligand>
</feature>
<feature type="binding site" evidence="1">
    <location>
        <position position="38"/>
    </location>
    <ligand>
        <name>Mg(2+)</name>
        <dbReference type="ChEBI" id="CHEBI:18420"/>
        <label>1</label>
    </ligand>
</feature>
<feature type="binding site" evidence="1">
    <location>
        <position position="38"/>
    </location>
    <ligand>
        <name>Mg(2+)</name>
        <dbReference type="ChEBI" id="CHEBI:18420"/>
        <label>2</label>
    </ligand>
</feature>
<feature type="binding site" evidence="1">
    <location>
        <position position="42"/>
    </location>
    <ligand>
        <name>D-ribulose 5-phosphate</name>
        <dbReference type="ChEBI" id="CHEBI:58121"/>
    </ligand>
</feature>
<feature type="binding site" evidence="1">
    <location>
        <begin position="150"/>
        <end position="154"/>
    </location>
    <ligand>
        <name>D-ribulose 5-phosphate</name>
        <dbReference type="ChEBI" id="CHEBI:58121"/>
    </ligand>
</feature>
<feature type="binding site" evidence="1">
    <location>
        <position position="153"/>
    </location>
    <ligand>
        <name>Mg(2+)</name>
        <dbReference type="ChEBI" id="CHEBI:18420"/>
        <label>2</label>
    </ligand>
</feature>
<feature type="binding site" evidence="1">
    <location>
        <position position="174"/>
    </location>
    <ligand>
        <name>D-ribulose 5-phosphate</name>
        <dbReference type="ChEBI" id="CHEBI:58121"/>
    </ligand>
</feature>
<feature type="site" description="Essential for catalytic activity" evidence="1">
    <location>
        <position position="136"/>
    </location>
</feature>
<feature type="site" description="Essential for catalytic activity" evidence="1">
    <location>
        <position position="174"/>
    </location>
</feature>
<proteinExistence type="inferred from homology"/>
<keyword id="KW-0456">Lyase</keyword>
<keyword id="KW-0460">Magnesium</keyword>
<keyword id="KW-0464">Manganese</keyword>
<keyword id="KW-0479">Metal-binding</keyword>
<keyword id="KW-0686">Riboflavin biosynthesis</keyword>
<comment type="function">
    <text evidence="1">Catalyzes the conversion of D-ribulose 5-phosphate to formate and 3,4-dihydroxy-2-butanone 4-phosphate.</text>
</comment>
<comment type="catalytic activity">
    <reaction evidence="1">
        <text>D-ribulose 5-phosphate = (2S)-2-hydroxy-3-oxobutyl phosphate + formate + H(+)</text>
        <dbReference type="Rhea" id="RHEA:18457"/>
        <dbReference type="ChEBI" id="CHEBI:15378"/>
        <dbReference type="ChEBI" id="CHEBI:15740"/>
        <dbReference type="ChEBI" id="CHEBI:58121"/>
        <dbReference type="ChEBI" id="CHEBI:58830"/>
        <dbReference type="EC" id="4.1.99.12"/>
    </reaction>
</comment>
<comment type="cofactor">
    <cofactor evidence="1">
        <name>Mg(2+)</name>
        <dbReference type="ChEBI" id="CHEBI:18420"/>
    </cofactor>
    <cofactor evidence="1">
        <name>Mn(2+)</name>
        <dbReference type="ChEBI" id="CHEBI:29035"/>
    </cofactor>
    <text evidence="1">Binds 2 divalent metal cations per subunit. Magnesium or manganese.</text>
</comment>
<comment type="pathway">
    <text evidence="1">Cofactor biosynthesis; riboflavin biosynthesis; 2-hydroxy-3-oxobutyl phosphate from D-ribulose 5-phosphate: step 1/1.</text>
</comment>
<comment type="subunit">
    <text evidence="1">Homodimer.</text>
</comment>
<comment type="similarity">
    <text evidence="1">Belongs to the DHBP synthase family.</text>
</comment>
<reference key="1">
    <citation type="journal article" date="2006" name="PLoS Genet.">
        <title>The complete genome sequence and comparative genome analysis of the high pathogenicity Yersinia enterocolitica strain 8081.</title>
        <authorList>
            <person name="Thomson N.R."/>
            <person name="Howard S."/>
            <person name="Wren B.W."/>
            <person name="Holden M.T.G."/>
            <person name="Crossman L."/>
            <person name="Challis G.L."/>
            <person name="Churcher C."/>
            <person name="Mungall K."/>
            <person name="Brooks K."/>
            <person name="Chillingworth T."/>
            <person name="Feltwell T."/>
            <person name="Abdellah Z."/>
            <person name="Hauser H."/>
            <person name="Jagels K."/>
            <person name="Maddison M."/>
            <person name="Moule S."/>
            <person name="Sanders M."/>
            <person name="Whitehead S."/>
            <person name="Quail M.A."/>
            <person name="Dougan G."/>
            <person name="Parkhill J."/>
            <person name="Prentice M.B."/>
        </authorList>
    </citation>
    <scope>NUCLEOTIDE SEQUENCE [LARGE SCALE GENOMIC DNA]</scope>
    <source>
        <strain>NCTC 13174 / 8081</strain>
    </source>
</reference>
<protein>
    <recommendedName>
        <fullName evidence="1">3,4-dihydroxy-2-butanone 4-phosphate synthase</fullName>
        <shortName evidence="1">DHBP synthase</shortName>
        <ecNumber evidence="1">4.1.99.12</ecNumber>
    </recommendedName>
</protein>
<name>RIBB_YERE8</name>
<evidence type="ECO:0000255" key="1">
    <source>
        <dbReference type="HAMAP-Rule" id="MF_00180"/>
    </source>
</evidence>
<accession>A1JQV2</accession>